<sequence>MDVFQKVEKIGEGTYGVVYKARNKVTGQLVALKKIRLDLEAEGVPSTAVREISLLKELKHPNIIKLLDVVHREKKLYMVFEFLTQDLKRHMDSSPTSELPLPVVKSYLAQLLEGVSFCHSHRVIHRDLKPQNLLLDGLGAIKLADFGLARAFGVPLRTYTHEVVTLWYRAPEILLGSKFYSTAVDIWSIGCIFAEMVTGKALFPGDSEIDQLFRIFRTLGTPSEATWPGVSQMPDYQSSFPKWSRKGLEEIVPSLGPEGKDLLLRLLQYDPSQRISAKTALAHPYFSPGHSLAPQQCTAGRSSR</sequence>
<organism>
    <name type="scientific">Mus musculus</name>
    <name type="common">Mouse</name>
    <dbReference type="NCBI Taxonomy" id="10090"/>
    <lineage>
        <taxon>Eukaryota</taxon>
        <taxon>Metazoa</taxon>
        <taxon>Chordata</taxon>
        <taxon>Craniata</taxon>
        <taxon>Vertebrata</taxon>
        <taxon>Euteleostomi</taxon>
        <taxon>Mammalia</taxon>
        <taxon>Eutheria</taxon>
        <taxon>Euarchontoglires</taxon>
        <taxon>Glires</taxon>
        <taxon>Rodentia</taxon>
        <taxon>Myomorpha</taxon>
        <taxon>Muroidea</taxon>
        <taxon>Muridae</taxon>
        <taxon>Murinae</taxon>
        <taxon>Mus</taxon>
        <taxon>Mus</taxon>
    </lineage>
</organism>
<accession>Q80YP0</accession>
<accession>Q3TLP6</accession>
<accession>Q9D6V6</accession>
<reference key="1">
    <citation type="journal article" date="2001" name="Proc. Natl. Acad. Sci. U.S.A.">
        <title>A premature-termination mutation in the Mus musculus cyclin-dependent kinase 3 gene.</title>
        <authorList>
            <person name="Ye X."/>
            <person name="Zhu C."/>
            <person name="Harper J.W."/>
        </authorList>
    </citation>
    <scope>NUCLEOTIDE SEQUENCE [GENOMIC DNA]</scope>
    <scope>DEVELOPMENTAL STAGE</scope>
    <scope>POLYMORPHISM</scope>
    <source>
        <strain>129/Sv</strain>
        <strain>C57BL/6J</strain>
        <tissue>Tongue</tissue>
    </source>
</reference>
<reference key="2">
    <citation type="journal article" date="2005" name="Science">
        <title>The transcriptional landscape of the mammalian genome.</title>
        <authorList>
            <person name="Carninci P."/>
            <person name="Kasukawa T."/>
            <person name="Katayama S."/>
            <person name="Gough J."/>
            <person name="Frith M.C."/>
            <person name="Maeda N."/>
            <person name="Oyama R."/>
            <person name="Ravasi T."/>
            <person name="Lenhard B."/>
            <person name="Wells C."/>
            <person name="Kodzius R."/>
            <person name="Shimokawa K."/>
            <person name="Bajic V.B."/>
            <person name="Brenner S.E."/>
            <person name="Batalov S."/>
            <person name="Forrest A.R."/>
            <person name="Zavolan M."/>
            <person name="Davis M.J."/>
            <person name="Wilming L.G."/>
            <person name="Aidinis V."/>
            <person name="Allen J.E."/>
            <person name="Ambesi-Impiombato A."/>
            <person name="Apweiler R."/>
            <person name="Aturaliya R.N."/>
            <person name="Bailey T.L."/>
            <person name="Bansal M."/>
            <person name="Baxter L."/>
            <person name="Beisel K.W."/>
            <person name="Bersano T."/>
            <person name="Bono H."/>
            <person name="Chalk A.M."/>
            <person name="Chiu K.P."/>
            <person name="Choudhary V."/>
            <person name="Christoffels A."/>
            <person name="Clutterbuck D.R."/>
            <person name="Crowe M.L."/>
            <person name="Dalla E."/>
            <person name="Dalrymple B.P."/>
            <person name="de Bono B."/>
            <person name="Della Gatta G."/>
            <person name="di Bernardo D."/>
            <person name="Down T."/>
            <person name="Engstrom P."/>
            <person name="Fagiolini M."/>
            <person name="Faulkner G."/>
            <person name="Fletcher C.F."/>
            <person name="Fukushima T."/>
            <person name="Furuno M."/>
            <person name="Futaki S."/>
            <person name="Gariboldi M."/>
            <person name="Georgii-Hemming P."/>
            <person name="Gingeras T.R."/>
            <person name="Gojobori T."/>
            <person name="Green R.E."/>
            <person name="Gustincich S."/>
            <person name="Harbers M."/>
            <person name="Hayashi Y."/>
            <person name="Hensch T.K."/>
            <person name="Hirokawa N."/>
            <person name="Hill D."/>
            <person name="Huminiecki L."/>
            <person name="Iacono M."/>
            <person name="Ikeo K."/>
            <person name="Iwama A."/>
            <person name="Ishikawa T."/>
            <person name="Jakt M."/>
            <person name="Kanapin A."/>
            <person name="Katoh M."/>
            <person name="Kawasawa Y."/>
            <person name="Kelso J."/>
            <person name="Kitamura H."/>
            <person name="Kitano H."/>
            <person name="Kollias G."/>
            <person name="Krishnan S.P."/>
            <person name="Kruger A."/>
            <person name="Kummerfeld S.K."/>
            <person name="Kurochkin I.V."/>
            <person name="Lareau L.F."/>
            <person name="Lazarevic D."/>
            <person name="Lipovich L."/>
            <person name="Liu J."/>
            <person name="Liuni S."/>
            <person name="McWilliam S."/>
            <person name="Madan Babu M."/>
            <person name="Madera M."/>
            <person name="Marchionni L."/>
            <person name="Matsuda H."/>
            <person name="Matsuzawa S."/>
            <person name="Miki H."/>
            <person name="Mignone F."/>
            <person name="Miyake S."/>
            <person name="Morris K."/>
            <person name="Mottagui-Tabar S."/>
            <person name="Mulder N."/>
            <person name="Nakano N."/>
            <person name="Nakauchi H."/>
            <person name="Ng P."/>
            <person name="Nilsson R."/>
            <person name="Nishiguchi S."/>
            <person name="Nishikawa S."/>
            <person name="Nori F."/>
            <person name="Ohara O."/>
            <person name="Okazaki Y."/>
            <person name="Orlando V."/>
            <person name="Pang K.C."/>
            <person name="Pavan W.J."/>
            <person name="Pavesi G."/>
            <person name="Pesole G."/>
            <person name="Petrovsky N."/>
            <person name="Piazza S."/>
            <person name="Reed J."/>
            <person name="Reid J.F."/>
            <person name="Ring B.Z."/>
            <person name="Ringwald M."/>
            <person name="Rost B."/>
            <person name="Ruan Y."/>
            <person name="Salzberg S.L."/>
            <person name="Sandelin A."/>
            <person name="Schneider C."/>
            <person name="Schoenbach C."/>
            <person name="Sekiguchi K."/>
            <person name="Semple C.A."/>
            <person name="Seno S."/>
            <person name="Sessa L."/>
            <person name="Sheng Y."/>
            <person name="Shibata Y."/>
            <person name="Shimada H."/>
            <person name="Shimada K."/>
            <person name="Silva D."/>
            <person name="Sinclair B."/>
            <person name="Sperling S."/>
            <person name="Stupka E."/>
            <person name="Sugiura K."/>
            <person name="Sultana R."/>
            <person name="Takenaka Y."/>
            <person name="Taki K."/>
            <person name="Tammoja K."/>
            <person name="Tan S.L."/>
            <person name="Tang S."/>
            <person name="Taylor M.S."/>
            <person name="Tegner J."/>
            <person name="Teichmann S.A."/>
            <person name="Ueda H.R."/>
            <person name="van Nimwegen E."/>
            <person name="Verardo R."/>
            <person name="Wei C.L."/>
            <person name="Yagi K."/>
            <person name="Yamanishi H."/>
            <person name="Zabarovsky E."/>
            <person name="Zhu S."/>
            <person name="Zimmer A."/>
            <person name="Hide W."/>
            <person name="Bult C."/>
            <person name="Grimmond S.M."/>
            <person name="Teasdale R.D."/>
            <person name="Liu E.T."/>
            <person name="Brusic V."/>
            <person name="Quackenbush J."/>
            <person name="Wahlestedt C."/>
            <person name="Mattick J.S."/>
            <person name="Hume D.A."/>
            <person name="Kai C."/>
            <person name="Sasaki D."/>
            <person name="Tomaru Y."/>
            <person name="Fukuda S."/>
            <person name="Kanamori-Katayama M."/>
            <person name="Suzuki M."/>
            <person name="Aoki J."/>
            <person name="Arakawa T."/>
            <person name="Iida J."/>
            <person name="Imamura K."/>
            <person name="Itoh M."/>
            <person name="Kato T."/>
            <person name="Kawaji H."/>
            <person name="Kawagashira N."/>
            <person name="Kawashima T."/>
            <person name="Kojima M."/>
            <person name="Kondo S."/>
            <person name="Konno H."/>
            <person name="Nakano K."/>
            <person name="Ninomiya N."/>
            <person name="Nishio T."/>
            <person name="Okada M."/>
            <person name="Plessy C."/>
            <person name="Shibata K."/>
            <person name="Shiraki T."/>
            <person name="Suzuki S."/>
            <person name="Tagami M."/>
            <person name="Waki K."/>
            <person name="Watahiki A."/>
            <person name="Okamura-Oho Y."/>
            <person name="Suzuki H."/>
            <person name="Kawai J."/>
            <person name="Hayashizaki Y."/>
        </authorList>
    </citation>
    <scope>NUCLEOTIDE SEQUENCE [LARGE SCALE MRNA] (ISOFORM 2)</scope>
    <source>
        <tissue>Mammary gland</tissue>
    </source>
</reference>
<reference key="3">
    <citation type="journal article" date="2009" name="PLoS Biol.">
        <title>Lineage-specific biology revealed by a finished genome assembly of the mouse.</title>
        <authorList>
            <person name="Church D.M."/>
            <person name="Goodstadt L."/>
            <person name="Hillier L.W."/>
            <person name="Zody M.C."/>
            <person name="Goldstein S."/>
            <person name="She X."/>
            <person name="Bult C.J."/>
            <person name="Agarwala R."/>
            <person name="Cherry J.L."/>
            <person name="DiCuccio M."/>
            <person name="Hlavina W."/>
            <person name="Kapustin Y."/>
            <person name="Meric P."/>
            <person name="Maglott D."/>
            <person name="Birtle Z."/>
            <person name="Marques A.C."/>
            <person name="Graves T."/>
            <person name="Zhou S."/>
            <person name="Teague B."/>
            <person name="Potamousis K."/>
            <person name="Churas C."/>
            <person name="Place M."/>
            <person name="Herschleb J."/>
            <person name="Runnheim R."/>
            <person name="Forrest D."/>
            <person name="Amos-Landgraf J."/>
            <person name="Schwartz D.C."/>
            <person name="Cheng Z."/>
            <person name="Lindblad-Toh K."/>
            <person name="Eichler E.E."/>
            <person name="Ponting C.P."/>
        </authorList>
    </citation>
    <scope>NUCLEOTIDE SEQUENCE [LARGE SCALE GENOMIC DNA]</scope>
    <source>
        <strain>C57BL/6J</strain>
    </source>
</reference>
<reference key="4">
    <citation type="journal article" date="2001" name="Eur. J. Biochem.">
        <title>ik3-1/Cables is a substrate for cyclin-dependent kinase 3 (cdk 3).</title>
        <authorList>
            <person name="Yamochi T."/>
            <person name="Semba K."/>
            <person name="Tsuji K."/>
            <person name="Mizumoto K."/>
            <person name="Sato H."/>
            <person name="Matsuura Y."/>
            <person name="Nishimoto I."/>
            <person name="Matsuoka M."/>
        </authorList>
    </citation>
    <scope>FUNCTION AS CABLES1 KINASE</scope>
</reference>
<reference key="5">
    <citation type="journal article" date="2002" name="Biochim. Biophys. Acta">
        <title>Ik3-2, a relative to ik3-1/cables, is associated with cdk3, cdk5, and c-abl.</title>
        <authorList>
            <person name="Sato H."/>
            <person name="Nishimoto I."/>
            <person name="Matsuoka M."/>
        </authorList>
    </citation>
    <scope>INTERACTION WITH CABLES2</scope>
</reference>
<protein>
    <recommendedName>
        <fullName>Cyclin-dependent kinase 3</fullName>
        <ecNumber>2.7.11.22</ecNumber>
    </recommendedName>
    <alternativeName>
        <fullName>Cell division protein kinase 3</fullName>
    </alternativeName>
</protein>
<name>CDK3_MOUSE</name>
<keyword id="KW-0025">Alternative splicing</keyword>
<keyword id="KW-0067">ATP-binding</keyword>
<keyword id="KW-0131">Cell cycle</keyword>
<keyword id="KW-0132">Cell division</keyword>
<keyword id="KW-0418">Kinase</keyword>
<keyword id="KW-0498">Mitosis</keyword>
<keyword id="KW-0547">Nucleotide-binding</keyword>
<keyword id="KW-1185">Reference proteome</keyword>
<keyword id="KW-0723">Serine/threonine-protein kinase</keyword>
<keyword id="KW-0808">Transferase</keyword>
<comment type="function">
    <text evidence="5">Serine/threonine-protein kinase that plays a critical role in the control of the eukaryotic cell cycle; involved in G0-G1 and G1-S cell cycle transitions. Interacts with CCNC/cyclin-C during interphase. Phosphorylates histone H1, ATF1, RB1 and CABLES1. ATF1 phosphorylation triggers ATF1 transactivation and transcriptional activities, and promotes cell proliferation and transformation. CDK3/cyclin-C mediated RB1 phosphorylation is required for G0-G1 transition. Promotes G1-S transition probably by contributing to the activation of E2F1, E2F2 and E2F3 in a RB1-independent manner.</text>
</comment>
<comment type="catalytic activity">
    <reaction>
        <text>L-seryl-[protein] + ATP = O-phospho-L-seryl-[protein] + ADP + H(+)</text>
        <dbReference type="Rhea" id="RHEA:17989"/>
        <dbReference type="Rhea" id="RHEA-COMP:9863"/>
        <dbReference type="Rhea" id="RHEA-COMP:11604"/>
        <dbReference type="ChEBI" id="CHEBI:15378"/>
        <dbReference type="ChEBI" id="CHEBI:29999"/>
        <dbReference type="ChEBI" id="CHEBI:30616"/>
        <dbReference type="ChEBI" id="CHEBI:83421"/>
        <dbReference type="ChEBI" id="CHEBI:456216"/>
        <dbReference type="EC" id="2.7.11.22"/>
    </reaction>
</comment>
<comment type="catalytic activity">
    <reaction>
        <text>L-threonyl-[protein] + ATP = O-phospho-L-threonyl-[protein] + ADP + H(+)</text>
        <dbReference type="Rhea" id="RHEA:46608"/>
        <dbReference type="Rhea" id="RHEA-COMP:11060"/>
        <dbReference type="Rhea" id="RHEA-COMP:11605"/>
        <dbReference type="ChEBI" id="CHEBI:15378"/>
        <dbReference type="ChEBI" id="CHEBI:30013"/>
        <dbReference type="ChEBI" id="CHEBI:30616"/>
        <dbReference type="ChEBI" id="CHEBI:61977"/>
        <dbReference type="ChEBI" id="CHEBI:456216"/>
        <dbReference type="EC" id="2.7.11.22"/>
    </reaction>
</comment>
<comment type="subunit">
    <text evidence="1 6">Interacts with CABLES1 and ATF1. Binding to CCNC/cyclin-C promotes RB1 phosphorylation (By similarity). Binds to CABLES2.</text>
</comment>
<comment type="alternative products">
    <event type="alternative splicing"/>
    <isoform>
        <id>Q80YP0-1</id>
        <name>1</name>
        <sequence type="displayed"/>
    </isoform>
    <isoform>
        <id>Q80YP0-2</id>
        <name>2</name>
        <sequence type="described" ref="VSP_023572"/>
    </isoform>
</comment>
<comment type="developmental stage">
    <text evidence="4">Expressed in heart, lung, nasal cavity, roof-plate of the fourth ventricle, skin, cartilage primordium of the basisphenoid and basioccipital bone at 12.5 dpc.</text>
</comment>
<comment type="polymorphism">
    <text evidence="4">A point mutation converts Trp-187 to a premature termination codon, resulting in a truncated form that has no catalytic activity. This truncation occurs near the T loop, which is involved in activation by CDK-activating kinase and deletes motif XI known to be required for kinase function. Consequently, the truncated protein generates a null allele. This mutation is found in laboratory strains but not in wild-mice species such as M.spretus and M.musculus castaneus.</text>
</comment>
<comment type="similarity">
    <text evidence="8">Belongs to the protein kinase superfamily. CMGC Ser/Thr protein kinase family. CDC2/CDKX subfamily.</text>
</comment>
<comment type="caution">
    <text evidence="8">Defined as a polymorphic pseudogene by MGI.</text>
</comment>
<proteinExistence type="evidence at protein level"/>
<evidence type="ECO:0000250" key="1"/>
<evidence type="ECO:0000255" key="2">
    <source>
        <dbReference type="PROSITE-ProRule" id="PRU00159"/>
    </source>
</evidence>
<evidence type="ECO:0000255" key="3">
    <source>
        <dbReference type="PROSITE-ProRule" id="PRU10027"/>
    </source>
</evidence>
<evidence type="ECO:0000269" key="4">
    <source>
    </source>
</evidence>
<evidence type="ECO:0000269" key="5">
    <source>
    </source>
</evidence>
<evidence type="ECO:0000269" key="6">
    <source>
    </source>
</evidence>
<evidence type="ECO:0000303" key="7">
    <source>
    </source>
</evidence>
<evidence type="ECO:0000305" key="8"/>
<dbReference type="EC" id="2.7.11.22"/>
<dbReference type="EMBL" id="AF327523">
    <property type="protein sequence ID" value="AAK51354.1"/>
    <property type="molecule type" value="Genomic_DNA"/>
</dbReference>
<dbReference type="EMBL" id="AK009918">
    <property type="protein sequence ID" value="BAB26584.1"/>
    <property type="molecule type" value="mRNA"/>
</dbReference>
<dbReference type="EMBL" id="AK166387">
    <property type="protein sequence ID" value="BAE38746.1"/>
    <property type="molecule type" value="mRNA"/>
</dbReference>
<dbReference type="EMBL" id="AL669925">
    <property type="status" value="NOT_ANNOTATED_CDS"/>
    <property type="molecule type" value="Genomic_DNA"/>
</dbReference>
<dbReference type="SMR" id="Q80YP0"/>
<dbReference type="ComplexPortal" id="CPX-331">
    <property type="entry name" value="Cyclin C-CDK3 complex"/>
</dbReference>
<dbReference type="FunCoup" id="Q80YP0">
    <property type="interactions" value="489"/>
</dbReference>
<dbReference type="iPTMnet" id="Q80YP0"/>
<dbReference type="PhosphoSitePlus" id="Q80YP0"/>
<dbReference type="SwissPalm" id="Q80YP0"/>
<dbReference type="jPOST" id="Q80YP0"/>
<dbReference type="PeptideAtlas" id="Q80YP0"/>
<dbReference type="ProteomicsDB" id="281439">
    <molecule id="Q80YP0-1"/>
</dbReference>
<dbReference type="ProteomicsDB" id="281440">
    <molecule id="Q80YP0-2"/>
</dbReference>
<dbReference type="AGR" id="MGI:1916931"/>
<dbReference type="MGI" id="MGI:1916931">
    <property type="gene designation" value="Cdk3"/>
</dbReference>
<dbReference type="InParanoid" id="Q80YP0"/>
<dbReference type="PhylomeDB" id="Q80YP0"/>
<dbReference type="ChiTaRS" id="Cdkn3">
    <property type="organism name" value="mouse"/>
</dbReference>
<dbReference type="Proteomes" id="UP000000589">
    <property type="component" value="Unplaced"/>
</dbReference>
<dbReference type="RNAct" id="Q80YP0">
    <property type="molecule type" value="protein"/>
</dbReference>
<dbReference type="GO" id="GO:0000307">
    <property type="term" value="C:cyclin-dependent protein kinase holoenzyme complex"/>
    <property type="evidence" value="ECO:0000266"/>
    <property type="project" value="ComplexPortal"/>
</dbReference>
<dbReference type="GO" id="GO:0005524">
    <property type="term" value="F:ATP binding"/>
    <property type="evidence" value="ECO:0007669"/>
    <property type="project" value="UniProtKB-KW"/>
</dbReference>
<dbReference type="GO" id="GO:0004693">
    <property type="term" value="F:cyclin-dependent protein serine/threonine kinase activity"/>
    <property type="evidence" value="ECO:0007669"/>
    <property type="project" value="UniProtKB-EC"/>
</dbReference>
<dbReference type="GO" id="GO:0106310">
    <property type="term" value="F:protein serine kinase activity"/>
    <property type="evidence" value="ECO:0007669"/>
    <property type="project" value="RHEA"/>
</dbReference>
<dbReference type="GO" id="GO:0051301">
    <property type="term" value="P:cell division"/>
    <property type="evidence" value="ECO:0007669"/>
    <property type="project" value="UniProtKB-KW"/>
</dbReference>
<dbReference type="GO" id="GO:0045023">
    <property type="term" value="P:G0 to G1 transition"/>
    <property type="evidence" value="ECO:0000266"/>
    <property type="project" value="ComplexPortal"/>
</dbReference>
<dbReference type="GO" id="GO:0045746">
    <property type="term" value="P:negative regulation of Notch signaling pathway"/>
    <property type="evidence" value="ECO:0000266"/>
    <property type="project" value="ComplexPortal"/>
</dbReference>
<dbReference type="CDD" id="cd07835">
    <property type="entry name" value="STKc_CDK1_CdkB_like"/>
    <property type="match status" value="1"/>
</dbReference>
<dbReference type="FunFam" id="1.10.510.10:FF:000144">
    <property type="entry name" value="Cyclin-dependent kinase 2"/>
    <property type="match status" value="1"/>
</dbReference>
<dbReference type="FunFam" id="3.30.200.20:FF:000599">
    <property type="entry name" value="Cyclin-dependent kinase 2"/>
    <property type="match status" value="1"/>
</dbReference>
<dbReference type="Gene3D" id="3.30.200.20">
    <property type="entry name" value="Phosphorylase Kinase, domain 1"/>
    <property type="match status" value="1"/>
</dbReference>
<dbReference type="Gene3D" id="1.10.510.10">
    <property type="entry name" value="Transferase(Phosphotransferase) domain 1"/>
    <property type="match status" value="1"/>
</dbReference>
<dbReference type="InterPro" id="IPR050108">
    <property type="entry name" value="CDK"/>
</dbReference>
<dbReference type="InterPro" id="IPR011009">
    <property type="entry name" value="Kinase-like_dom_sf"/>
</dbReference>
<dbReference type="InterPro" id="IPR000719">
    <property type="entry name" value="Prot_kinase_dom"/>
</dbReference>
<dbReference type="InterPro" id="IPR017441">
    <property type="entry name" value="Protein_kinase_ATP_BS"/>
</dbReference>
<dbReference type="InterPro" id="IPR008271">
    <property type="entry name" value="Ser/Thr_kinase_AS"/>
</dbReference>
<dbReference type="PANTHER" id="PTHR24056">
    <property type="entry name" value="CELL DIVISION PROTEIN KINASE"/>
    <property type="match status" value="1"/>
</dbReference>
<dbReference type="PANTHER" id="PTHR24056:SF462">
    <property type="entry name" value="CYCLIN-DEPENDENT KINASE 3"/>
    <property type="match status" value="1"/>
</dbReference>
<dbReference type="Pfam" id="PF00069">
    <property type="entry name" value="Pkinase"/>
    <property type="match status" value="1"/>
</dbReference>
<dbReference type="SMART" id="SM00220">
    <property type="entry name" value="S_TKc"/>
    <property type="match status" value="1"/>
</dbReference>
<dbReference type="SUPFAM" id="SSF56112">
    <property type="entry name" value="Protein kinase-like (PK-like)"/>
    <property type="match status" value="1"/>
</dbReference>
<dbReference type="PROSITE" id="PS00107">
    <property type="entry name" value="PROTEIN_KINASE_ATP"/>
    <property type="match status" value="1"/>
</dbReference>
<dbReference type="PROSITE" id="PS50011">
    <property type="entry name" value="PROTEIN_KINASE_DOM"/>
    <property type="match status" value="1"/>
</dbReference>
<dbReference type="PROSITE" id="PS00108">
    <property type="entry name" value="PROTEIN_KINASE_ST"/>
    <property type="match status" value="1"/>
</dbReference>
<gene>
    <name type="primary">Cdk3</name>
    <name type="synonym">Cdk3-ps</name>
    <name type="synonym">Cdkn3</name>
</gene>
<feature type="chain" id="PRO_0000085777" description="Cyclin-dependent kinase 3">
    <location>
        <begin position="1"/>
        <end position="304"/>
    </location>
</feature>
<feature type="domain" description="Protein kinase" evidence="2">
    <location>
        <begin position="4"/>
        <end position="286"/>
    </location>
</feature>
<feature type="active site" description="Proton acceptor" evidence="2 3">
    <location>
        <position position="127"/>
    </location>
</feature>
<feature type="binding site" evidence="2">
    <location>
        <begin position="10"/>
        <end position="18"/>
    </location>
    <ligand>
        <name>ATP</name>
        <dbReference type="ChEBI" id="CHEBI:30616"/>
    </ligand>
</feature>
<feature type="binding site" evidence="2">
    <location>
        <position position="33"/>
    </location>
    <ligand>
        <name>ATP</name>
        <dbReference type="ChEBI" id="CHEBI:30616"/>
    </ligand>
</feature>
<feature type="splice variant" id="VSP_023572" description="In isoform 2." evidence="7">
    <location>
        <begin position="1"/>
        <end position="195"/>
    </location>
</feature>